<organism>
    <name type="scientific">Pseudarthrobacter chlorophenolicus (strain ATCC 700700 / DSM 12829 / CIP 107037 / JCM 12360 / KCTC 9906 / NCIMB 13794 / A6)</name>
    <name type="common">Arthrobacter chlorophenolicus</name>
    <dbReference type="NCBI Taxonomy" id="452863"/>
    <lineage>
        <taxon>Bacteria</taxon>
        <taxon>Bacillati</taxon>
        <taxon>Actinomycetota</taxon>
        <taxon>Actinomycetes</taxon>
        <taxon>Micrococcales</taxon>
        <taxon>Micrococcaceae</taxon>
        <taxon>Pseudarthrobacter</taxon>
    </lineage>
</organism>
<keyword id="KW-0687">Ribonucleoprotein</keyword>
<keyword id="KW-0689">Ribosomal protein</keyword>
<keyword id="KW-0694">RNA-binding</keyword>
<keyword id="KW-0699">rRNA-binding</keyword>
<gene>
    <name evidence="1" type="primary">rpsO</name>
    <name type="ordered locus">Achl_1438</name>
</gene>
<feature type="chain" id="PRO_1000166398" description="Small ribosomal subunit protein uS15">
    <location>
        <begin position="1"/>
        <end position="89"/>
    </location>
</feature>
<protein>
    <recommendedName>
        <fullName evidence="1">Small ribosomal subunit protein uS15</fullName>
    </recommendedName>
    <alternativeName>
        <fullName evidence="2">30S ribosomal protein S15</fullName>
    </alternativeName>
</protein>
<dbReference type="EMBL" id="CP001341">
    <property type="protein sequence ID" value="ACL39428.1"/>
    <property type="molecule type" value="Genomic_DNA"/>
</dbReference>
<dbReference type="RefSeq" id="WP_015936651.1">
    <property type="nucleotide sequence ID" value="NC_011886.1"/>
</dbReference>
<dbReference type="SMR" id="B8HG66"/>
<dbReference type="STRING" id="452863.Achl_1438"/>
<dbReference type="KEGG" id="ach:Achl_1438"/>
<dbReference type="eggNOG" id="COG0184">
    <property type="taxonomic scope" value="Bacteria"/>
</dbReference>
<dbReference type="HOGENOM" id="CLU_148518_0_0_11"/>
<dbReference type="OrthoDB" id="9799262at2"/>
<dbReference type="Proteomes" id="UP000002505">
    <property type="component" value="Chromosome"/>
</dbReference>
<dbReference type="GO" id="GO:0022627">
    <property type="term" value="C:cytosolic small ribosomal subunit"/>
    <property type="evidence" value="ECO:0007669"/>
    <property type="project" value="TreeGrafter"/>
</dbReference>
<dbReference type="GO" id="GO:0019843">
    <property type="term" value="F:rRNA binding"/>
    <property type="evidence" value="ECO:0007669"/>
    <property type="project" value="UniProtKB-UniRule"/>
</dbReference>
<dbReference type="GO" id="GO:0003735">
    <property type="term" value="F:structural constituent of ribosome"/>
    <property type="evidence" value="ECO:0007669"/>
    <property type="project" value="InterPro"/>
</dbReference>
<dbReference type="GO" id="GO:0006412">
    <property type="term" value="P:translation"/>
    <property type="evidence" value="ECO:0007669"/>
    <property type="project" value="UniProtKB-UniRule"/>
</dbReference>
<dbReference type="CDD" id="cd00353">
    <property type="entry name" value="Ribosomal_S15p_S13e"/>
    <property type="match status" value="1"/>
</dbReference>
<dbReference type="FunFam" id="1.10.287.10:FF:000002">
    <property type="entry name" value="30S ribosomal protein S15"/>
    <property type="match status" value="1"/>
</dbReference>
<dbReference type="Gene3D" id="6.10.250.3130">
    <property type="match status" value="1"/>
</dbReference>
<dbReference type="Gene3D" id="1.10.287.10">
    <property type="entry name" value="S15/NS1, RNA-binding"/>
    <property type="match status" value="1"/>
</dbReference>
<dbReference type="HAMAP" id="MF_01343_B">
    <property type="entry name" value="Ribosomal_uS15_B"/>
    <property type="match status" value="1"/>
</dbReference>
<dbReference type="InterPro" id="IPR000589">
    <property type="entry name" value="Ribosomal_uS15"/>
</dbReference>
<dbReference type="InterPro" id="IPR005290">
    <property type="entry name" value="Ribosomal_uS15_bac-type"/>
</dbReference>
<dbReference type="InterPro" id="IPR009068">
    <property type="entry name" value="uS15_NS1_RNA-bd_sf"/>
</dbReference>
<dbReference type="NCBIfam" id="TIGR00952">
    <property type="entry name" value="S15_bact"/>
    <property type="match status" value="1"/>
</dbReference>
<dbReference type="PANTHER" id="PTHR23321">
    <property type="entry name" value="RIBOSOMAL PROTEIN S15, BACTERIAL AND ORGANELLAR"/>
    <property type="match status" value="1"/>
</dbReference>
<dbReference type="PANTHER" id="PTHR23321:SF26">
    <property type="entry name" value="SMALL RIBOSOMAL SUBUNIT PROTEIN US15M"/>
    <property type="match status" value="1"/>
</dbReference>
<dbReference type="Pfam" id="PF00312">
    <property type="entry name" value="Ribosomal_S15"/>
    <property type="match status" value="1"/>
</dbReference>
<dbReference type="SMART" id="SM01387">
    <property type="entry name" value="Ribosomal_S15"/>
    <property type="match status" value="1"/>
</dbReference>
<dbReference type="SUPFAM" id="SSF47060">
    <property type="entry name" value="S15/NS1 RNA-binding domain"/>
    <property type="match status" value="1"/>
</dbReference>
<dbReference type="PROSITE" id="PS00362">
    <property type="entry name" value="RIBOSOMAL_S15"/>
    <property type="match status" value="1"/>
</dbReference>
<reference key="1">
    <citation type="submission" date="2009-01" db="EMBL/GenBank/DDBJ databases">
        <title>Complete sequence of chromosome of Arthrobacter chlorophenolicus A6.</title>
        <authorList>
            <consortium name="US DOE Joint Genome Institute"/>
            <person name="Lucas S."/>
            <person name="Copeland A."/>
            <person name="Lapidus A."/>
            <person name="Glavina del Rio T."/>
            <person name="Tice H."/>
            <person name="Bruce D."/>
            <person name="Goodwin L."/>
            <person name="Pitluck S."/>
            <person name="Goltsman E."/>
            <person name="Clum A."/>
            <person name="Larimer F."/>
            <person name="Land M."/>
            <person name="Hauser L."/>
            <person name="Kyrpides N."/>
            <person name="Mikhailova N."/>
            <person name="Jansson J."/>
            <person name="Richardson P."/>
        </authorList>
    </citation>
    <scope>NUCLEOTIDE SEQUENCE [LARGE SCALE GENOMIC DNA]</scope>
    <source>
        <strain>ATCC 700700 / DSM 12829 / CIP 107037 / JCM 12360 / KCTC 9906 / NCIMB 13794 / A6</strain>
    </source>
</reference>
<sequence>MALDAAVKQSIIKEYATGEGDTGSPEVQVAVLTQRIKDLTEHMKEHKHDYHTQRGLLAMVGRRKRMLSYLKKTDIARYRALIERLGLRR</sequence>
<proteinExistence type="inferred from homology"/>
<name>RS15_PSECP</name>
<accession>B8HG66</accession>
<comment type="function">
    <text evidence="1">One of the primary rRNA binding proteins, it binds directly to 16S rRNA where it helps nucleate assembly of the platform of the 30S subunit by binding and bridging several RNA helices of the 16S rRNA.</text>
</comment>
<comment type="function">
    <text evidence="1">Forms an intersubunit bridge (bridge B4) with the 23S rRNA of the 50S subunit in the ribosome.</text>
</comment>
<comment type="subunit">
    <text evidence="1">Part of the 30S ribosomal subunit. Forms a bridge to the 50S subunit in the 70S ribosome, contacting the 23S rRNA.</text>
</comment>
<comment type="similarity">
    <text evidence="1">Belongs to the universal ribosomal protein uS15 family.</text>
</comment>
<evidence type="ECO:0000255" key="1">
    <source>
        <dbReference type="HAMAP-Rule" id="MF_01343"/>
    </source>
</evidence>
<evidence type="ECO:0000305" key="2"/>